<comment type="function">
    <text evidence="1">Required for the formation of a threonylcarbamoyl group on adenosine at position 37 (t(6)A37) in tRNAs that read codons beginning with adenine. Is involved in the transfer of the threonylcarbamoyl moiety of threonylcarbamoyl-AMP (TC-AMP) to the N6 group of A37, together with TsaE and TsaB. TsaD likely plays a direct catalytic role in this reaction.</text>
</comment>
<comment type="catalytic activity">
    <reaction evidence="1">
        <text>L-threonylcarbamoyladenylate + adenosine(37) in tRNA = N(6)-L-threonylcarbamoyladenosine(37) in tRNA + AMP + H(+)</text>
        <dbReference type="Rhea" id="RHEA:37059"/>
        <dbReference type="Rhea" id="RHEA-COMP:10162"/>
        <dbReference type="Rhea" id="RHEA-COMP:10163"/>
        <dbReference type="ChEBI" id="CHEBI:15378"/>
        <dbReference type="ChEBI" id="CHEBI:73682"/>
        <dbReference type="ChEBI" id="CHEBI:74411"/>
        <dbReference type="ChEBI" id="CHEBI:74418"/>
        <dbReference type="ChEBI" id="CHEBI:456215"/>
        <dbReference type="EC" id="2.3.1.234"/>
    </reaction>
</comment>
<comment type="cofactor">
    <cofactor evidence="1">
        <name>Fe(2+)</name>
        <dbReference type="ChEBI" id="CHEBI:29033"/>
    </cofactor>
    <text evidence="1">Binds 1 Fe(2+) ion per subunit.</text>
</comment>
<comment type="subcellular location">
    <subcellularLocation>
        <location evidence="1">Cytoplasm</location>
    </subcellularLocation>
</comment>
<comment type="similarity">
    <text evidence="1">Belongs to the KAE1 / TsaD family.</text>
</comment>
<dbReference type="EC" id="2.3.1.234" evidence="1"/>
<dbReference type="EMBL" id="CP000038">
    <property type="protein sequence ID" value="AAZ89783.1"/>
    <property type="molecule type" value="Genomic_DNA"/>
</dbReference>
<dbReference type="RefSeq" id="WP_001264365.1">
    <property type="nucleotide sequence ID" value="NC_007384.1"/>
</dbReference>
<dbReference type="SMR" id="Q3YXH9"/>
<dbReference type="GeneID" id="93778929"/>
<dbReference type="KEGG" id="ssn:SSON_3201"/>
<dbReference type="HOGENOM" id="CLU_023208_0_2_6"/>
<dbReference type="Proteomes" id="UP000002529">
    <property type="component" value="Chromosome"/>
</dbReference>
<dbReference type="GO" id="GO:0005737">
    <property type="term" value="C:cytoplasm"/>
    <property type="evidence" value="ECO:0007669"/>
    <property type="project" value="UniProtKB-SubCell"/>
</dbReference>
<dbReference type="GO" id="GO:0005506">
    <property type="term" value="F:iron ion binding"/>
    <property type="evidence" value="ECO:0007669"/>
    <property type="project" value="UniProtKB-UniRule"/>
</dbReference>
<dbReference type="GO" id="GO:0061711">
    <property type="term" value="F:N(6)-L-threonylcarbamoyladenine synthase activity"/>
    <property type="evidence" value="ECO:0007669"/>
    <property type="project" value="UniProtKB-EC"/>
</dbReference>
<dbReference type="GO" id="GO:0002949">
    <property type="term" value="P:tRNA threonylcarbamoyladenosine modification"/>
    <property type="evidence" value="ECO:0007669"/>
    <property type="project" value="UniProtKB-UniRule"/>
</dbReference>
<dbReference type="CDD" id="cd24097">
    <property type="entry name" value="ASKHA_NBD_TsaD-like"/>
    <property type="match status" value="1"/>
</dbReference>
<dbReference type="FunFam" id="3.30.420.40:FF:000031">
    <property type="entry name" value="tRNA N6-adenosine threonylcarbamoyltransferase"/>
    <property type="match status" value="1"/>
</dbReference>
<dbReference type="Gene3D" id="3.30.420.40">
    <property type="match status" value="2"/>
</dbReference>
<dbReference type="HAMAP" id="MF_01445">
    <property type="entry name" value="TsaD"/>
    <property type="match status" value="1"/>
</dbReference>
<dbReference type="InterPro" id="IPR043129">
    <property type="entry name" value="ATPase_NBD"/>
</dbReference>
<dbReference type="InterPro" id="IPR000905">
    <property type="entry name" value="Gcp-like_dom"/>
</dbReference>
<dbReference type="InterPro" id="IPR017861">
    <property type="entry name" value="KAE1/TsaD"/>
</dbReference>
<dbReference type="InterPro" id="IPR017860">
    <property type="entry name" value="Peptidase_M22_CS"/>
</dbReference>
<dbReference type="InterPro" id="IPR022450">
    <property type="entry name" value="TsaD"/>
</dbReference>
<dbReference type="NCBIfam" id="TIGR00329">
    <property type="entry name" value="gcp_kae1"/>
    <property type="match status" value="1"/>
</dbReference>
<dbReference type="NCBIfam" id="TIGR03723">
    <property type="entry name" value="T6A_TsaD_YgjD"/>
    <property type="match status" value="1"/>
</dbReference>
<dbReference type="PANTHER" id="PTHR11735">
    <property type="entry name" value="TRNA N6-ADENOSINE THREONYLCARBAMOYLTRANSFERASE"/>
    <property type="match status" value="1"/>
</dbReference>
<dbReference type="PANTHER" id="PTHR11735:SF6">
    <property type="entry name" value="TRNA N6-ADENOSINE THREONYLCARBAMOYLTRANSFERASE, MITOCHONDRIAL"/>
    <property type="match status" value="1"/>
</dbReference>
<dbReference type="Pfam" id="PF00814">
    <property type="entry name" value="TsaD"/>
    <property type="match status" value="1"/>
</dbReference>
<dbReference type="PRINTS" id="PR00789">
    <property type="entry name" value="OSIALOPTASE"/>
</dbReference>
<dbReference type="SUPFAM" id="SSF53067">
    <property type="entry name" value="Actin-like ATPase domain"/>
    <property type="match status" value="1"/>
</dbReference>
<dbReference type="PROSITE" id="PS01016">
    <property type="entry name" value="GLYCOPROTEASE"/>
    <property type="match status" value="1"/>
</dbReference>
<name>TSAD_SHISS</name>
<proteinExistence type="inferred from homology"/>
<protein>
    <recommendedName>
        <fullName evidence="1">tRNA N6-adenosine threonylcarbamoyltransferase</fullName>
        <ecNumber evidence="1">2.3.1.234</ecNumber>
    </recommendedName>
    <alternativeName>
        <fullName evidence="1">N6-L-threonylcarbamoyladenine synthase</fullName>
        <shortName evidence="1">t(6)A synthase</shortName>
    </alternativeName>
    <alternativeName>
        <fullName evidence="1">t(6)A37 threonylcarbamoyladenosine biosynthesis protein TsaD</fullName>
    </alternativeName>
    <alternativeName>
        <fullName evidence="1">tRNA threonylcarbamoyladenosine biosynthesis protein TsaD</fullName>
    </alternativeName>
</protein>
<gene>
    <name evidence="1" type="primary">tsaD</name>
    <name type="synonym">gcp</name>
    <name type="ordered locus">SSON_3201</name>
</gene>
<feature type="chain" id="PRO_1000024457" description="tRNA N6-adenosine threonylcarbamoyltransferase">
    <location>
        <begin position="1"/>
        <end position="337"/>
    </location>
</feature>
<feature type="binding site" evidence="1">
    <location>
        <position position="111"/>
    </location>
    <ligand>
        <name>Fe cation</name>
        <dbReference type="ChEBI" id="CHEBI:24875"/>
    </ligand>
</feature>
<feature type="binding site" evidence="1">
    <location>
        <position position="115"/>
    </location>
    <ligand>
        <name>Fe cation</name>
        <dbReference type="ChEBI" id="CHEBI:24875"/>
    </ligand>
</feature>
<feature type="binding site" evidence="1">
    <location>
        <begin position="134"/>
        <end position="138"/>
    </location>
    <ligand>
        <name>substrate</name>
    </ligand>
</feature>
<feature type="binding site" evidence="1">
    <location>
        <position position="167"/>
    </location>
    <ligand>
        <name>substrate</name>
    </ligand>
</feature>
<feature type="binding site" evidence="1">
    <location>
        <position position="180"/>
    </location>
    <ligand>
        <name>substrate</name>
    </ligand>
</feature>
<feature type="binding site" evidence="1">
    <location>
        <position position="272"/>
    </location>
    <ligand>
        <name>substrate</name>
    </ligand>
</feature>
<feature type="binding site" evidence="1">
    <location>
        <position position="300"/>
    </location>
    <ligand>
        <name>Fe cation</name>
        <dbReference type="ChEBI" id="CHEBI:24875"/>
    </ligand>
</feature>
<keyword id="KW-0012">Acyltransferase</keyword>
<keyword id="KW-0963">Cytoplasm</keyword>
<keyword id="KW-0408">Iron</keyword>
<keyword id="KW-0479">Metal-binding</keyword>
<keyword id="KW-1185">Reference proteome</keyword>
<keyword id="KW-0808">Transferase</keyword>
<keyword id="KW-0819">tRNA processing</keyword>
<accession>Q3YXH9</accession>
<evidence type="ECO:0000255" key="1">
    <source>
        <dbReference type="HAMAP-Rule" id="MF_01445"/>
    </source>
</evidence>
<reference key="1">
    <citation type="journal article" date="2005" name="Nucleic Acids Res.">
        <title>Genome dynamics and diversity of Shigella species, the etiologic agents of bacillary dysentery.</title>
        <authorList>
            <person name="Yang F."/>
            <person name="Yang J."/>
            <person name="Zhang X."/>
            <person name="Chen L."/>
            <person name="Jiang Y."/>
            <person name="Yan Y."/>
            <person name="Tang X."/>
            <person name="Wang J."/>
            <person name="Xiong Z."/>
            <person name="Dong J."/>
            <person name="Xue Y."/>
            <person name="Zhu Y."/>
            <person name="Xu X."/>
            <person name="Sun L."/>
            <person name="Chen S."/>
            <person name="Nie H."/>
            <person name="Peng J."/>
            <person name="Xu J."/>
            <person name="Wang Y."/>
            <person name="Yuan Z."/>
            <person name="Wen Y."/>
            <person name="Yao Z."/>
            <person name="Shen Y."/>
            <person name="Qiang B."/>
            <person name="Hou Y."/>
            <person name="Yu J."/>
            <person name="Jin Q."/>
        </authorList>
    </citation>
    <scope>NUCLEOTIDE SEQUENCE [LARGE SCALE GENOMIC DNA]</scope>
    <source>
        <strain>Ss046</strain>
    </source>
</reference>
<sequence>MRVLGIETSCDETGIAIYDDEKGLLANQLYSQVKLHADYGGVVPELASRDHVRKTVPLIQAALKESGLTAKDIDAVAYTAGPGLVGALLVGATVGRSLAFAWNVPAIPVHHMEGHLLAPMLEDNPPEFPFVALLVSGGHTQLISVTGIGQYELLGESIDDAAGEAFDKTAKLLGLDYPGGPLLSKMAAQGTAGRFVFPRPMTDRPGLDFSFSGLKTFAANTIRDNGTDDQTRADIARAFEDAVVDTLMIKCKRALDQTGFKRLVMAGGVSANRTLRAKLAEMMKKRRGEVFYARPEFCTDNGAMIAYAGMVRFKAGATADLGVSVRPRWPLAELPAA</sequence>
<organism>
    <name type="scientific">Shigella sonnei (strain Ss046)</name>
    <dbReference type="NCBI Taxonomy" id="300269"/>
    <lineage>
        <taxon>Bacteria</taxon>
        <taxon>Pseudomonadati</taxon>
        <taxon>Pseudomonadota</taxon>
        <taxon>Gammaproteobacteria</taxon>
        <taxon>Enterobacterales</taxon>
        <taxon>Enterobacteriaceae</taxon>
        <taxon>Shigella</taxon>
    </lineage>
</organism>